<keyword id="KW-0067">ATP-binding</keyword>
<keyword id="KW-0963">Cytoplasm</keyword>
<keyword id="KW-0418">Kinase</keyword>
<keyword id="KW-0547">Nucleotide-binding</keyword>
<keyword id="KW-1185">Reference proteome</keyword>
<keyword id="KW-0808">Transferase</keyword>
<sequence length="196" mass="22339">MPFVVVITGIPGVGKSTITRLALQRTRAKFRVVNFGDIMFQEAVKAGWVSHRDEVRKLSLKVQRELQLKAAQRILEISQKEPVLLDTHATIKTPLGYMLGFPREVIEVINPRFMVIIEANPSEILGRRLRDLKRDRDVETEDQIQRHQDLNRAATISYAMHSNALIKIIENHEDKGLEEAVNELVKILDLAVNEDA</sequence>
<gene>
    <name evidence="1" type="primary">adkA</name>
    <name type="ordered locus">TSIB_0313</name>
</gene>
<feature type="chain" id="PRO_1000204397" description="Adenylate kinase">
    <location>
        <begin position="1"/>
        <end position="196"/>
    </location>
</feature>
<feature type="binding site" evidence="1">
    <location>
        <begin position="9"/>
        <end position="17"/>
    </location>
    <ligand>
        <name>ATP</name>
        <dbReference type="ChEBI" id="CHEBI:30616"/>
    </ligand>
</feature>
<reference key="1">
    <citation type="journal article" date="2009" name="Appl. Environ. Microbiol.">
        <title>Metabolic versatility and indigenous origin of the archaeon Thermococcus sibiricus, isolated from a siberian oil reservoir, as revealed by genome analysis.</title>
        <authorList>
            <person name="Mardanov A.V."/>
            <person name="Ravin N.V."/>
            <person name="Svetlitchnyi V.A."/>
            <person name="Beletsky A.V."/>
            <person name="Miroshnichenko M.L."/>
            <person name="Bonch-Osmolovskaya E.A."/>
            <person name="Skryabin K.G."/>
        </authorList>
    </citation>
    <scope>NUCLEOTIDE SEQUENCE [LARGE SCALE GENOMIC DNA]</scope>
    <source>
        <strain>DSM 12597 / MM 739</strain>
    </source>
</reference>
<protein>
    <recommendedName>
        <fullName evidence="1">Adenylate kinase</fullName>
        <shortName evidence="1">AK</shortName>
        <ecNumber evidence="1">2.7.4.3</ecNumber>
    </recommendedName>
    <alternativeName>
        <fullName evidence="1">ATP-AMP transphosphorylase</fullName>
    </alternativeName>
</protein>
<dbReference type="EC" id="2.7.4.3" evidence="1"/>
<dbReference type="EMBL" id="CP001463">
    <property type="protein sequence ID" value="ACS89379.1"/>
    <property type="molecule type" value="Genomic_DNA"/>
</dbReference>
<dbReference type="RefSeq" id="WP_015848599.1">
    <property type="nucleotide sequence ID" value="NC_012883.1"/>
</dbReference>
<dbReference type="SMR" id="C6A184"/>
<dbReference type="STRING" id="604354.TSIB_0313"/>
<dbReference type="GeneID" id="8095286"/>
<dbReference type="KEGG" id="tsi:TSIB_0313"/>
<dbReference type="eggNOG" id="arCOG01039">
    <property type="taxonomic scope" value="Archaea"/>
</dbReference>
<dbReference type="HOGENOM" id="CLU_119371_0_0_2"/>
<dbReference type="OrthoDB" id="26198at2157"/>
<dbReference type="Proteomes" id="UP000009079">
    <property type="component" value="Chromosome"/>
</dbReference>
<dbReference type="GO" id="GO:0005737">
    <property type="term" value="C:cytoplasm"/>
    <property type="evidence" value="ECO:0007669"/>
    <property type="project" value="UniProtKB-SubCell"/>
</dbReference>
<dbReference type="GO" id="GO:0004017">
    <property type="term" value="F:adenylate kinase activity"/>
    <property type="evidence" value="ECO:0007669"/>
    <property type="project" value="UniProtKB-UniRule"/>
</dbReference>
<dbReference type="GO" id="GO:0005524">
    <property type="term" value="F:ATP binding"/>
    <property type="evidence" value="ECO:0007669"/>
    <property type="project" value="UniProtKB-UniRule"/>
</dbReference>
<dbReference type="Gene3D" id="3.40.50.300">
    <property type="entry name" value="P-loop containing nucleotide triphosphate hydrolases"/>
    <property type="match status" value="1"/>
</dbReference>
<dbReference type="HAMAP" id="MF_00234">
    <property type="entry name" value="Adenylate_kinase_AdkA"/>
    <property type="match status" value="1"/>
</dbReference>
<dbReference type="InterPro" id="IPR023477">
    <property type="entry name" value="Adenylate_kinase_AdkA"/>
</dbReference>
<dbReference type="InterPro" id="IPR027417">
    <property type="entry name" value="P-loop_NTPase"/>
</dbReference>
<dbReference type="NCBIfam" id="NF003122">
    <property type="entry name" value="PRK04040.1"/>
    <property type="match status" value="1"/>
</dbReference>
<dbReference type="Pfam" id="PF13207">
    <property type="entry name" value="AAA_17"/>
    <property type="match status" value="1"/>
</dbReference>
<dbReference type="SUPFAM" id="SSF52540">
    <property type="entry name" value="P-loop containing nucleoside triphosphate hydrolases"/>
    <property type="match status" value="1"/>
</dbReference>
<accession>C6A184</accession>
<comment type="catalytic activity">
    <reaction evidence="1">
        <text>AMP + ATP = 2 ADP</text>
        <dbReference type="Rhea" id="RHEA:12973"/>
        <dbReference type="ChEBI" id="CHEBI:30616"/>
        <dbReference type="ChEBI" id="CHEBI:456215"/>
        <dbReference type="ChEBI" id="CHEBI:456216"/>
        <dbReference type="EC" id="2.7.4.3"/>
    </reaction>
</comment>
<comment type="subcellular location">
    <subcellularLocation>
        <location evidence="1">Cytoplasm</location>
    </subcellularLocation>
</comment>
<comment type="similarity">
    <text evidence="1">Belongs to the archaeal adenylate kinase family.</text>
</comment>
<evidence type="ECO:0000255" key="1">
    <source>
        <dbReference type="HAMAP-Rule" id="MF_00234"/>
    </source>
</evidence>
<name>KADA_THESM</name>
<proteinExistence type="inferred from homology"/>
<organism>
    <name type="scientific">Thermococcus sibiricus (strain DSM 12597 / MM 739)</name>
    <dbReference type="NCBI Taxonomy" id="604354"/>
    <lineage>
        <taxon>Archaea</taxon>
        <taxon>Methanobacteriati</taxon>
        <taxon>Methanobacteriota</taxon>
        <taxon>Thermococci</taxon>
        <taxon>Thermococcales</taxon>
        <taxon>Thermococcaceae</taxon>
        <taxon>Thermococcus</taxon>
    </lineage>
</organism>